<organism>
    <name type="scientific">Parabacteroides distasonis (strain ATCC 8503 / DSM 20701 / CIP 104284 / JCM 5825 / NCTC 11152)</name>
    <dbReference type="NCBI Taxonomy" id="435591"/>
    <lineage>
        <taxon>Bacteria</taxon>
        <taxon>Pseudomonadati</taxon>
        <taxon>Bacteroidota</taxon>
        <taxon>Bacteroidia</taxon>
        <taxon>Bacteroidales</taxon>
        <taxon>Tannerellaceae</taxon>
        <taxon>Parabacteroides</taxon>
    </lineage>
</organism>
<dbReference type="EC" id="4.3.2.10" evidence="1"/>
<dbReference type="EMBL" id="CP000140">
    <property type="protein sequence ID" value="ABR43751.1"/>
    <property type="molecule type" value="Genomic_DNA"/>
</dbReference>
<dbReference type="RefSeq" id="WP_009275763.1">
    <property type="nucleotide sequence ID" value="NZ_LR215978.1"/>
</dbReference>
<dbReference type="SMR" id="A6LDI7"/>
<dbReference type="STRING" id="435591.BDI_2018"/>
<dbReference type="PaxDb" id="435591-BDI_2018"/>
<dbReference type="KEGG" id="pdi:BDI_2018"/>
<dbReference type="eggNOG" id="COG0107">
    <property type="taxonomic scope" value="Bacteria"/>
</dbReference>
<dbReference type="HOGENOM" id="CLU_048577_4_0_10"/>
<dbReference type="BioCyc" id="PDIS435591:G1G5A-2071-MONOMER"/>
<dbReference type="UniPathway" id="UPA00031">
    <property type="reaction ID" value="UER00010"/>
</dbReference>
<dbReference type="Proteomes" id="UP000000566">
    <property type="component" value="Chromosome"/>
</dbReference>
<dbReference type="GO" id="GO:0005737">
    <property type="term" value="C:cytoplasm"/>
    <property type="evidence" value="ECO:0007669"/>
    <property type="project" value="UniProtKB-SubCell"/>
</dbReference>
<dbReference type="GO" id="GO:0000107">
    <property type="term" value="F:imidazoleglycerol-phosphate synthase activity"/>
    <property type="evidence" value="ECO:0007669"/>
    <property type="project" value="UniProtKB-UniRule"/>
</dbReference>
<dbReference type="GO" id="GO:0016829">
    <property type="term" value="F:lyase activity"/>
    <property type="evidence" value="ECO:0007669"/>
    <property type="project" value="UniProtKB-KW"/>
</dbReference>
<dbReference type="GO" id="GO:0000105">
    <property type="term" value="P:L-histidine biosynthetic process"/>
    <property type="evidence" value="ECO:0007669"/>
    <property type="project" value="UniProtKB-UniRule"/>
</dbReference>
<dbReference type="CDD" id="cd04731">
    <property type="entry name" value="HisF"/>
    <property type="match status" value="1"/>
</dbReference>
<dbReference type="FunFam" id="3.20.20.70:FF:000006">
    <property type="entry name" value="Imidazole glycerol phosphate synthase subunit HisF"/>
    <property type="match status" value="1"/>
</dbReference>
<dbReference type="Gene3D" id="3.20.20.70">
    <property type="entry name" value="Aldolase class I"/>
    <property type="match status" value="1"/>
</dbReference>
<dbReference type="HAMAP" id="MF_01013">
    <property type="entry name" value="HisF"/>
    <property type="match status" value="1"/>
</dbReference>
<dbReference type="InterPro" id="IPR013785">
    <property type="entry name" value="Aldolase_TIM"/>
</dbReference>
<dbReference type="InterPro" id="IPR006062">
    <property type="entry name" value="His_biosynth"/>
</dbReference>
<dbReference type="InterPro" id="IPR004651">
    <property type="entry name" value="HisF"/>
</dbReference>
<dbReference type="InterPro" id="IPR050064">
    <property type="entry name" value="IGPS_HisA/HisF"/>
</dbReference>
<dbReference type="InterPro" id="IPR011060">
    <property type="entry name" value="RibuloseP-bd_barrel"/>
</dbReference>
<dbReference type="NCBIfam" id="TIGR00735">
    <property type="entry name" value="hisF"/>
    <property type="match status" value="1"/>
</dbReference>
<dbReference type="PANTHER" id="PTHR21235:SF2">
    <property type="entry name" value="IMIDAZOLE GLYCEROL PHOSPHATE SYNTHASE HISHF"/>
    <property type="match status" value="1"/>
</dbReference>
<dbReference type="PANTHER" id="PTHR21235">
    <property type="entry name" value="IMIDAZOLE GLYCEROL PHOSPHATE SYNTHASE SUBUNIT HISF/H IGP SYNTHASE SUBUNIT HISF/H"/>
    <property type="match status" value="1"/>
</dbReference>
<dbReference type="Pfam" id="PF00977">
    <property type="entry name" value="His_biosynth"/>
    <property type="match status" value="1"/>
</dbReference>
<dbReference type="SUPFAM" id="SSF51366">
    <property type="entry name" value="Ribulose-phoshate binding barrel"/>
    <property type="match status" value="1"/>
</dbReference>
<proteinExistence type="inferred from homology"/>
<evidence type="ECO:0000255" key="1">
    <source>
        <dbReference type="HAMAP-Rule" id="MF_01013"/>
    </source>
</evidence>
<name>HIS6_PARD8</name>
<feature type="chain" id="PRO_1000063107" description="Imidazole glycerol phosphate synthase subunit HisF">
    <location>
        <begin position="1"/>
        <end position="251"/>
    </location>
</feature>
<feature type="active site" evidence="1">
    <location>
        <position position="11"/>
    </location>
</feature>
<feature type="active site" evidence="1">
    <location>
        <position position="130"/>
    </location>
</feature>
<comment type="function">
    <text evidence="1">IGPS catalyzes the conversion of PRFAR and glutamine to IGP, AICAR and glutamate. The HisF subunit catalyzes the cyclization activity that produces IGP and AICAR from PRFAR using the ammonia provided by the HisH subunit.</text>
</comment>
<comment type="catalytic activity">
    <reaction evidence="1">
        <text>5-[(5-phospho-1-deoxy-D-ribulos-1-ylimino)methylamino]-1-(5-phospho-beta-D-ribosyl)imidazole-4-carboxamide + L-glutamine = D-erythro-1-(imidazol-4-yl)glycerol 3-phosphate + 5-amino-1-(5-phospho-beta-D-ribosyl)imidazole-4-carboxamide + L-glutamate + H(+)</text>
        <dbReference type="Rhea" id="RHEA:24793"/>
        <dbReference type="ChEBI" id="CHEBI:15378"/>
        <dbReference type="ChEBI" id="CHEBI:29985"/>
        <dbReference type="ChEBI" id="CHEBI:58278"/>
        <dbReference type="ChEBI" id="CHEBI:58359"/>
        <dbReference type="ChEBI" id="CHEBI:58475"/>
        <dbReference type="ChEBI" id="CHEBI:58525"/>
        <dbReference type="EC" id="4.3.2.10"/>
    </reaction>
</comment>
<comment type="pathway">
    <text evidence="1">Amino-acid biosynthesis; L-histidine biosynthesis; L-histidine from 5-phospho-alpha-D-ribose 1-diphosphate: step 5/9.</text>
</comment>
<comment type="subunit">
    <text evidence="1">Heterodimer of HisH and HisF.</text>
</comment>
<comment type="subcellular location">
    <subcellularLocation>
        <location evidence="1">Cytoplasm</location>
    </subcellularLocation>
</comment>
<comment type="similarity">
    <text evidence="1">Belongs to the HisA/HisF family.</text>
</comment>
<sequence length="251" mass="27092">MLAKRIVPCLDIKDGKTVKGINFVNFRDAGDPVELGAQYSREGADELVYLDITASHEGRKTFTELVKQVAAHISIPFTVGGGINELKDVDRLLSAGADKVSINSAALRNPALIEEIAKNFGSQVCVVAIDANFENNDWLCYLNGGRVPTDKYLFQWASEAESRGAGEILFTSMTHDGVKDGYANDALATLADTLHIPVIASGGAGKMEHFRDTFSNGKAGAALAASVFHFGEIRISDLKQYLKDEGINVRI</sequence>
<protein>
    <recommendedName>
        <fullName evidence="1">Imidazole glycerol phosphate synthase subunit HisF</fullName>
        <ecNumber evidence="1">4.3.2.10</ecNumber>
    </recommendedName>
    <alternativeName>
        <fullName evidence="1">IGP synthase cyclase subunit</fullName>
    </alternativeName>
    <alternativeName>
        <fullName evidence="1">IGP synthase subunit HisF</fullName>
    </alternativeName>
    <alternativeName>
        <fullName evidence="1">ImGP synthase subunit HisF</fullName>
        <shortName evidence="1">IGPS subunit HisF</shortName>
    </alternativeName>
</protein>
<accession>A6LDI7</accession>
<keyword id="KW-0028">Amino-acid biosynthesis</keyword>
<keyword id="KW-0963">Cytoplasm</keyword>
<keyword id="KW-0368">Histidine biosynthesis</keyword>
<keyword id="KW-0456">Lyase</keyword>
<keyword id="KW-1185">Reference proteome</keyword>
<reference key="1">
    <citation type="journal article" date="2007" name="PLoS Biol.">
        <title>Evolution of symbiotic bacteria in the distal human intestine.</title>
        <authorList>
            <person name="Xu J."/>
            <person name="Mahowald M.A."/>
            <person name="Ley R.E."/>
            <person name="Lozupone C.A."/>
            <person name="Hamady M."/>
            <person name="Martens E.C."/>
            <person name="Henrissat B."/>
            <person name="Coutinho P.M."/>
            <person name="Minx P."/>
            <person name="Latreille P."/>
            <person name="Cordum H."/>
            <person name="Van Brunt A."/>
            <person name="Kim K."/>
            <person name="Fulton R.S."/>
            <person name="Fulton L.A."/>
            <person name="Clifton S.W."/>
            <person name="Wilson R.K."/>
            <person name="Knight R.D."/>
            <person name="Gordon J.I."/>
        </authorList>
    </citation>
    <scope>NUCLEOTIDE SEQUENCE [LARGE SCALE GENOMIC DNA]</scope>
    <source>
        <strain>ATCC 8503 / DSM 20701 / CIP 104284 / JCM 5825 / NCTC 11152</strain>
    </source>
</reference>
<gene>
    <name evidence="1" type="primary">hisF</name>
    <name type="ordered locus">BDI_2018</name>
</gene>